<organism>
    <name type="scientific">Trichlorobacter lovleyi (strain ATCC BAA-1151 / DSM 17278 / SZ)</name>
    <name type="common">Geobacter lovleyi</name>
    <dbReference type="NCBI Taxonomy" id="398767"/>
    <lineage>
        <taxon>Bacteria</taxon>
        <taxon>Pseudomonadati</taxon>
        <taxon>Thermodesulfobacteriota</taxon>
        <taxon>Desulfuromonadia</taxon>
        <taxon>Geobacterales</taxon>
        <taxon>Geobacteraceae</taxon>
        <taxon>Trichlorobacter</taxon>
    </lineage>
</organism>
<comment type="function">
    <text evidence="1">Produces ATP from ADP in the presence of a proton gradient across the membrane. The alpha chain is a regulatory subunit.</text>
</comment>
<comment type="catalytic activity">
    <reaction evidence="1">
        <text>ATP + H2O + 4 H(+)(in) = ADP + phosphate + 5 H(+)(out)</text>
        <dbReference type="Rhea" id="RHEA:57720"/>
        <dbReference type="ChEBI" id="CHEBI:15377"/>
        <dbReference type="ChEBI" id="CHEBI:15378"/>
        <dbReference type="ChEBI" id="CHEBI:30616"/>
        <dbReference type="ChEBI" id="CHEBI:43474"/>
        <dbReference type="ChEBI" id="CHEBI:456216"/>
        <dbReference type="EC" id="7.1.2.2"/>
    </reaction>
</comment>
<comment type="subunit">
    <text evidence="1">F-type ATPases have 2 components, CF(1) - the catalytic core - and CF(0) - the membrane proton channel. CF(1) has five subunits: alpha(3), beta(3), gamma(1), delta(1), epsilon(1). CF(0) has three main subunits: a(1), b(2) and c(9-12). The alpha and beta chains form an alternating ring which encloses part of the gamma chain. CF(1) is attached to CF(0) by a central stalk formed by the gamma and epsilon chains, while a peripheral stalk is formed by the delta and b chains.</text>
</comment>
<comment type="subcellular location">
    <subcellularLocation>
        <location evidence="1">Cell inner membrane</location>
        <topology evidence="1">Peripheral membrane protein</topology>
    </subcellularLocation>
</comment>
<comment type="similarity">
    <text evidence="1">Belongs to the ATPase alpha/beta chains family.</text>
</comment>
<feature type="chain" id="PRO_1000143387" description="ATP synthase subunit alpha">
    <location>
        <begin position="1"/>
        <end position="502"/>
    </location>
</feature>
<feature type="binding site" evidence="1">
    <location>
        <begin position="169"/>
        <end position="176"/>
    </location>
    <ligand>
        <name>ATP</name>
        <dbReference type="ChEBI" id="CHEBI:30616"/>
    </ligand>
</feature>
<feature type="site" description="Required for activity" evidence="1">
    <location>
        <position position="362"/>
    </location>
</feature>
<reference key="1">
    <citation type="submission" date="2008-05" db="EMBL/GenBank/DDBJ databases">
        <title>Complete sequence of chromosome of Geobacter lovleyi SZ.</title>
        <authorList>
            <consortium name="US DOE Joint Genome Institute"/>
            <person name="Lucas S."/>
            <person name="Copeland A."/>
            <person name="Lapidus A."/>
            <person name="Glavina del Rio T."/>
            <person name="Dalin E."/>
            <person name="Tice H."/>
            <person name="Bruce D."/>
            <person name="Goodwin L."/>
            <person name="Pitluck S."/>
            <person name="Chertkov O."/>
            <person name="Meincke L."/>
            <person name="Brettin T."/>
            <person name="Detter J.C."/>
            <person name="Han C."/>
            <person name="Tapia R."/>
            <person name="Kuske C.R."/>
            <person name="Schmutz J."/>
            <person name="Larimer F."/>
            <person name="Land M."/>
            <person name="Hauser L."/>
            <person name="Kyrpides N."/>
            <person name="Mikhailova N."/>
            <person name="Sung Y."/>
            <person name="Fletcher K.E."/>
            <person name="Ritalahti K.M."/>
            <person name="Loeffler F.E."/>
            <person name="Richardson P."/>
        </authorList>
    </citation>
    <scope>NUCLEOTIDE SEQUENCE [LARGE SCALE GENOMIC DNA]</scope>
    <source>
        <strain>ATCC BAA-1151 / DSM 17278 / SZ</strain>
    </source>
</reference>
<evidence type="ECO:0000255" key="1">
    <source>
        <dbReference type="HAMAP-Rule" id="MF_01346"/>
    </source>
</evidence>
<protein>
    <recommendedName>
        <fullName evidence="1">ATP synthase subunit alpha</fullName>
        <ecNumber evidence="1">7.1.2.2</ecNumber>
    </recommendedName>
    <alternativeName>
        <fullName evidence="1">ATP synthase F1 sector subunit alpha</fullName>
    </alternativeName>
    <alternativeName>
        <fullName evidence="1">F-ATPase subunit alpha</fullName>
    </alternativeName>
</protein>
<accession>B3EA03</accession>
<sequence>MELRAEEISEIIKKQINEYGKEVEVSETGTIISIGDGIARIHGLAGAMAGELLEFPGGVSGMVLNLEEDNVGAAILGEFAEIKEGDTVKRTGRITEVPVGDALVGRVVNAIGQPIDGKGPINSSTFSKVEIKAPGIVARKSVHQPMATGLKAIDSMVPIGRGQRELIIGDRQTGKTAVAVDTIINQKGGDVICIYVAIGQKRSTVAQVVSKLTEHGAMDYTIVVAATASESAPLQFIAPYTGVTMGEYFRDNKKHALIIYDDLSKQAVAYRQLSLLLRRPPGREAYPGDVFYLHSRLLERACKLSDECGAGSLTALPIIETQAGDVSAYIPTNVISITDGQIYLESDLFFSGVRPAINVGLSVSRVGGSAQTKSMKQVAGTLRLNLAQYREMAAFAQFGSDLDKATQMQLARGERLVEILKQPQYRPIPNEKQVLVIFAANNGYLDDYPVSALKKYETELYAFFDNRQADVLTELREKQAIGDDLKAKLVSALDQFKKEFTA</sequence>
<proteinExistence type="inferred from homology"/>
<keyword id="KW-0066">ATP synthesis</keyword>
<keyword id="KW-0067">ATP-binding</keyword>
<keyword id="KW-0997">Cell inner membrane</keyword>
<keyword id="KW-1003">Cell membrane</keyword>
<keyword id="KW-0139">CF(1)</keyword>
<keyword id="KW-0375">Hydrogen ion transport</keyword>
<keyword id="KW-0406">Ion transport</keyword>
<keyword id="KW-0472">Membrane</keyword>
<keyword id="KW-0547">Nucleotide-binding</keyword>
<keyword id="KW-1185">Reference proteome</keyword>
<keyword id="KW-1278">Translocase</keyword>
<keyword id="KW-0813">Transport</keyword>
<gene>
    <name evidence="1" type="primary">atpA</name>
    <name type="ordered locus">Glov_3172</name>
</gene>
<name>ATPA_TRIL1</name>
<dbReference type="EC" id="7.1.2.2" evidence="1"/>
<dbReference type="EMBL" id="CP001089">
    <property type="protein sequence ID" value="ACD96878.1"/>
    <property type="molecule type" value="Genomic_DNA"/>
</dbReference>
<dbReference type="RefSeq" id="WP_012471202.1">
    <property type="nucleotide sequence ID" value="NC_010814.1"/>
</dbReference>
<dbReference type="SMR" id="B3EA03"/>
<dbReference type="STRING" id="398767.Glov_3172"/>
<dbReference type="KEGG" id="glo:Glov_3172"/>
<dbReference type="eggNOG" id="COG0056">
    <property type="taxonomic scope" value="Bacteria"/>
</dbReference>
<dbReference type="HOGENOM" id="CLU_010091_2_1_7"/>
<dbReference type="OrthoDB" id="9803053at2"/>
<dbReference type="Proteomes" id="UP000002420">
    <property type="component" value="Chromosome"/>
</dbReference>
<dbReference type="GO" id="GO:0005886">
    <property type="term" value="C:plasma membrane"/>
    <property type="evidence" value="ECO:0007669"/>
    <property type="project" value="UniProtKB-SubCell"/>
</dbReference>
<dbReference type="GO" id="GO:0045259">
    <property type="term" value="C:proton-transporting ATP synthase complex"/>
    <property type="evidence" value="ECO:0007669"/>
    <property type="project" value="UniProtKB-KW"/>
</dbReference>
<dbReference type="GO" id="GO:0043531">
    <property type="term" value="F:ADP binding"/>
    <property type="evidence" value="ECO:0007669"/>
    <property type="project" value="TreeGrafter"/>
</dbReference>
<dbReference type="GO" id="GO:0005524">
    <property type="term" value="F:ATP binding"/>
    <property type="evidence" value="ECO:0007669"/>
    <property type="project" value="UniProtKB-UniRule"/>
</dbReference>
<dbReference type="GO" id="GO:0046933">
    <property type="term" value="F:proton-transporting ATP synthase activity, rotational mechanism"/>
    <property type="evidence" value="ECO:0007669"/>
    <property type="project" value="UniProtKB-UniRule"/>
</dbReference>
<dbReference type="CDD" id="cd18113">
    <property type="entry name" value="ATP-synt_F1_alpha_C"/>
    <property type="match status" value="1"/>
</dbReference>
<dbReference type="CDD" id="cd18116">
    <property type="entry name" value="ATP-synt_F1_alpha_N"/>
    <property type="match status" value="1"/>
</dbReference>
<dbReference type="CDD" id="cd01132">
    <property type="entry name" value="F1-ATPase_alpha_CD"/>
    <property type="match status" value="1"/>
</dbReference>
<dbReference type="FunFam" id="1.20.150.20:FF:000001">
    <property type="entry name" value="ATP synthase subunit alpha"/>
    <property type="match status" value="1"/>
</dbReference>
<dbReference type="FunFam" id="2.40.30.20:FF:000001">
    <property type="entry name" value="ATP synthase subunit alpha"/>
    <property type="match status" value="1"/>
</dbReference>
<dbReference type="FunFam" id="3.40.50.300:FF:000002">
    <property type="entry name" value="ATP synthase subunit alpha"/>
    <property type="match status" value="1"/>
</dbReference>
<dbReference type="Gene3D" id="2.40.30.20">
    <property type="match status" value="1"/>
</dbReference>
<dbReference type="Gene3D" id="1.20.150.20">
    <property type="entry name" value="ATP synthase alpha/beta chain, C-terminal domain"/>
    <property type="match status" value="1"/>
</dbReference>
<dbReference type="Gene3D" id="3.40.50.300">
    <property type="entry name" value="P-loop containing nucleotide triphosphate hydrolases"/>
    <property type="match status" value="1"/>
</dbReference>
<dbReference type="HAMAP" id="MF_01346">
    <property type="entry name" value="ATP_synth_alpha_bact"/>
    <property type="match status" value="1"/>
</dbReference>
<dbReference type="InterPro" id="IPR023366">
    <property type="entry name" value="ATP_synth_asu-like_sf"/>
</dbReference>
<dbReference type="InterPro" id="IPR000793">
    <property type="entry name" value="ATP_synth_asu_C"/>
</dbReference>
<dbReference type="InterPro" id="IPR038376">
    <property type="entry name" value="ATP_synth_asu_C_sf"/>
</dbReference>
<dbReference type="InterPro" id="IPR033732">
    <property type="entry name" value="ATP_synth_F1_a_nt-bd_dom"/>
</dbReference>
<dbReference type="InterPro" id="IPR005294">
    <property type="entry name" value="ATP_synth_F1_asu"/>
</dbReference>
<dbReference type="InterPro" id="IPR020003">
    <property type="entry name" value="ATPase_a/bsu_AS"/>
</dbReference>
<dbReference type="InterPro" id="IPR004100">
    <property type="entry name" value="ATPase_F1/V1/A1_a/bsu_N"/>
</dbReference>
<dbReference type="InterPro" id="IPR036121">
    <property type="entry name" value="ATPase_F1/V1/A1_a/bsu_N_sf"/>
</dbReference>
<dbReference type="InterPro" id="IPR000194">
    <property type="entry name" value="ATPase_F1/V1/A1_a/bsu_nucl-bd"/>
</dbReference>
<dbReference type="InterPro" id="IPR027417">
    <property type="entry name" value="P-loop_NTPase"/>
</dbReference>
<dbReference type="NCBIfam" id="TIGR00962">
    <property type="entry name" value="atpA"/>
    <property type="match status" value="1"/>
</dbReference>
<dbReference type="NCBIfam" id="NF009884">
    <property type="entry name" value="PRK13343.1"/>
    <property type="match status" value="1"/>
</dbReference>
<dbReference type="PANTHER" id="PTHR48082">
    <property type="entry name" value="ATP SYNTHASE SUBUNIT ALPHA, MITOCHONDRIAL"/>
    <property type="match status" value="1"/>
</dbReference>
<dbReference type="PANTHER" id="PTHR48082:SF2">
    <property type="entry name" value="ATP SYNTHASE SUBUNIT ALPHA, MITOCHONDRIAL"/>
    <property type="match status" value="1"/>
</dbReference>
<dbReference type="Pfam" id="PF00006">
    <property type="entry name" value="ATP-synt_ab"/>
    <property type="match status" value="1"/>
</dbReference>
<dbReference type="Pfam" id="PF00306">
    <property type="entry name" value="ATP-synt_ab_C"/>
    <property type="match status" value="1"/>
</dbReference>
<dbReference type="Pfam" id="PF02874">
    <property type="entry name" value="ATP-synt_ab_N"/>
    <property type="match status" value="1"/>
</dbReference>
<dbReference type="PIRSF" id="PIRSF039088">
    <property type="entry name" value="F_ATPase_subunit_alpha"/>
    <property type="match status" value="1"/>
</dbReference>
<dbReference type="SUPFAM" id="SSF47917">
    <property type="entry name" value="C-terminal domain of alpha and beta subunits of F1 ATP synthase"/>
    <property type="match status" value="1"/>
</dbReference>
<dbReference type="SUPFAM" id="SSF50615">
    <property type="entry name" value="N-terminal domain of alpha and beta subunits of F1 ATP synthase"/>
    <property type="match status" value="1"/>
</dbReference>
<dbReference type="SUPFAM" id="SSF52540">
    <property type="entry name" value="P-loop containing nucleoside triphosphate hydrolases"/>
    <property type="match status" value="1"/>
</dbReference>
<dbReference type="PROSITE" id="PS00152">
    <property type="entry name" value="ATPASE_ALPHA_BETA"/>
    <property type="match status" value="1"/>
</dbReference>